<organism>
    <name type="scientific">Staphylococcus haemolyticus (strain JCSC1435)</name>
    <dbReference type="NCBI Taxonomy" id="279808"/>
    <lineage>
        <taxon>Bacteria</taxon>
        <taxon>Bacillati</taxon>
        <taxon>Bacillota</taxon>
        <taxon>Bacilli</taxon>
        <taxon>Bacillales</taxon>
        <taxon>Staphylococcaceae</taxon>
        <taxon>Staphylococcus</taxon>
    </lineage>
</organism>
<comment type="function">
    <text evidence="1">Component of the thioredoxin-thioredoxin reductase system. Participates in various redox reactions through the reversible oxidation of its active center dithiol to a disulfide and catalyzes dithiol-disulfide exchange reactions (By similarity).</text>
</comment>
<comment type="similarity">
    <text evidence="3">Belongs to the thioredoxin family.</text>
</comment>
<evidence type="ECO:0000250" key="1"/>
<evidence type="ECO:0000255" key="2">
    <source>
        <dbReference type="PROSITE-ProRule" id="PRU00691"/>
    </source>
</evidence>
<evidence type="ECO:0000305" key="3"/>
<reference key="1">
    <citation type="journal article" date="2005" name="J. Bacteriol.">
        <title>Whole-genome sequencing of Staphylococcus haemolyticus uncovers the extreme plasticity of its genome and the evolution of human-colonizing staphylococcal species.</title>
        <authorList>
            <person name="Takeuchi F."/>
            <person name="Watanabe S."/>
            <person name="Baba T."/>
            <person name="Yuzawa H."/>
            <person name="Ito T."/>
            <person name="Morimoto Y."/>
            <person name="Kuroda M."/>
            <person name="Cui L."/>
            <person name="Takahashi M."/>
            <person name="Ankai A."/>
            <person name="Baba S."/>
            <person name="Fukui S."/>
            <person name="Lee J.C."/>
            <person name="Hiramatsu K."/>
        </authorList>
    </citation>
    <scope>NUCLEOTIDE SEQUENCE [LARGE SCALE GENOMIC DNA]</scope>
    <source>
        <strain>JCSC1435</strain>
    </source>
</reference>
<sequence length="104" mass="11453">MAIVKVTDSNFDENIQSGVKLVDFWATWCGPCKMIAPVLEELAGDYDGKADILKLDVDENPSTAAKFEVMSIPTLIVFKDGEPVDKVVGFQPKENLAEVLDKHL</sequence>
<gene>
    <name type="primary">trxA</name>
    <name type="ordered locus">SH1816</name>
</gene>
<name>THIO_STAHJ</name>
<protein>
    <recommendedName>
        <fullName>Thioredoxin</fullName>
        <shortName>Trx</shortName>
    </recommendedName>
</protein>
<feature type="chain" id="PRO_0000267207" description="Thioredoxin">
    <location>
        <begin position="1"/>
        <end position="104"/>
    </location>
</feature>
<feature type="domain" description="Thioredoxin" evidence="2">
    <location>
        <begin position="2"/>
        <end position="104"/>
    </location>
</feature>
<feature type="disulfide bond" description="Redox-active" evidence="2">
    <location>
        <begin position="29"/>
        <end position="32"/>
    </location>
</feature>
<keyword id="KW-1015">Disulfide bond</keyword>
<keyword id="KW-0249">Electron transport</keyword>
<keyword id="KW-0676">Redox-active center</keyword>
<keyword id="KW-0813">Transport</keyword>
<accession>Q4L5F0</accession>
<dbReference type="EMBL" id="AP006716">
    <property type="protein sequence ID" value="BAE05125.1"/>
    <property type="molecule type" value="Genomic_DNA"/>
</dbReference>
<dbReference type="RefSeq" id="WP_011276093.1">
    <property type="nucleotide sequence ID" value="NC_007168.1"/>
</dbReference>
<dbReference type="SMR" id="Q4L5F0"/>
<dbReference type="GeneID" id="93781184"/>
<dbReference type="KEGG" id="sha:SH1816"/>
<dbReference type="eggNOG" id="COG3118">
    <property type="taxonomic scope" value="Bacteria"/>
</dbReference>
<dbReference type="HOGENOM" id="CLU_090389_10_2_9"/>
<dbReference type="OrthoDB" id="9790390at2"/>
<dbReference type="Proteomes" id="UP000000543">
    <property type="component" value="Chromosome"/>
</dbReference>
<dbReference type="GO" id="GO:0005829">
    <property type="term" value="C:cytosol"/>
    <property type="evidence" value="ECO:0007669"/>
    <property type="project" value="TreeGrafter"/>
</dbReference>
<dbReference type="GO" id="GO:0015035">
    <property type="term" value="F:protein-disulfide reductase activity"/>
    <property type="evidence" value="ECO:0007669"/>
    <property type="project" value="InterPro"/>
</dbReference>
<dbReference type="GO" id="GO:0045454">
    <property type="term" value="P:cell redox homeostasis"/>
    <property type="evidence" value="ECO:0007669"/>
    <property type="project" value="TreeGrafter"/>
</dbReference>
<dbReference type="CDD" id="cd02947">
    <property type="entry name" value="TRX_family"/>
    <property type="match status" value="1"/>
</dbReference>
<dbReference type="FunFam" id="3.40.30.10:FF:000001">
    <property type="entry name" value="Thioredoxin"/>
    <property type="match status" value="1"/>
</dbReference>
<dbReference type="Gene3D" id="3.40.30.10">
    <property type="entry name" value="Glutaredoxin"/>
    <property type="match status" value="1"/>
</dbReference>
<dbReference type="InterPro" id="IPR005746">
    <property type="entry name" value="Thioredoxin"/>
</dbReference>
<dbReference type="InterPro" id="IPR036249">
    <property type="entry name" value="Thioredoxin-like_sf"/>
</dbReference>
<dbReference type="InterPro" id="IPR017937">
    <property type="entry name" value="Thioredoxin_CS"/>
</dbReference>
<dbReference type="InterPro" id="IPR013766">
    <property type="entry name" value="Thioredoxin_domain"/>
</dbReference>
<dbReference type="NCBIfam" id="TIGR01068">
    <property type="entry name" value="thioredoxin"/>
    <property type="match status" value="1"/>
</dbReference>
<dbReference type="PANTHER" id="PTHR45663">
    <property type="entry name" value="GEO12009P1"/>
    <property type="match status" value="1"/>
</dbReference>
<dbReference type="PANTHER" id="PTHR45663:SF11">
    <property type="entry name" value="GEO12009P1"/>
    <property type="match status" value="1"/>
</dbReference>
<dbReference type="Pfam" id="PF00085">
    <property type="entry name" value="Thioredoxin"/>
    <property type="match status" value="1"/>
</dbReference>
<dbReference type="PIRSF" id="PIRSF000077">
    <property type="entry name" value="Thioredoxin"/>
    <property type="match status" value="1"/>
</dbReference>
<dbReference type="PRINTS" id="PR00421">
    <property type="entry name" value="THIOREDOXIN"/>
</dbReference>
<dbReference type="SUPFAM" id="SSF52833">
    <property type="entry name" value="Thioredoxin-like"/>
    <property type="match status" value="1"/>
</dbReference>
<dbReference type="PROSITE" id="PS00194">
    <property type="entry name" value="THIOREDOXIN_1"/>
    <property type="match status" value="1"/>
</dbReference>
<dbReference type="PROSITE" id="PS51352">
    <property type="entry name" value="THIOREDOXIN_2"/>
    <property type="match status" value="1"/>
</dbReference>
<proteinExistence type="inferred from homology"/>